<protein>
    <recommendedName>
        <fullName>Rho guanine nucleotide exchange factor 35</fullName>
    </recommendedName>
    <alternativeName>
        <fullName>Rho guanine nucleotide exchange factor 5-like protein</fullName>
    </alternativeName>
</protein>
<evidence type="ECO:0000256" key="1">
    <source>
        <dbReference type="SAM" id="MobiDB-lite"/>
    </source>
</evidence>
<evidence type="ECO:0000305" key="2"/>
<evidence type="ECO:0007744" key="3">
    <source>
    </source>
</evidence>
<sequence>MEAEEAQHGASPPISAIEEFSIIPEAPMRSSQVSALGLEAQEDEDPSYKWREEHRLSATQQSELRDVCDYAIETMPSFPKEGSADVEPNQESLVAEACDTPEHWEAVPQSLAGRQARTLAPPELWACPIQSEHLDMAPFSSDLGSEEEEVEFWPGLTSLTLGSGQAEEEEETSSDNSGQTRYYSPCEEHPAETNQNEGAESGTIRQGEELPSEELQESQGLLHPQEVQVLEEQGQQEAGFRGEGTLREDVCADGLLGEEQMIEQVNDEKGEQKQKQEQVQDVMLGRQGERMGLTGEPEGLNDGEWEQEDMERKAQGQGGPEQGEERKRELQVPEENRADSQDEKSQTFLGKSEEVTGKQEDHGIKEKGVPVSGQEAKEPESWDGGRLGAVGRARSREEENEHHGPSMPALIAPEDSPHCDLFPGASYLVTQIPGTQTESRAEELSPAALSPLLEPIRCSHQPISLLGSFLTEESPDKEKLLSVL</sequence>
<feature type="chain" id="PRO_0000348462" description="Rho guanine nucleotide exchange factor 35">
    <location>
        <begin position="1"/>
        <end position="484"/>
    </location>
</feature>
<feature type="region of interest" description="Disordered" evidence="1">
    <location>
        <begin position="139"/>
        <end position="418"/>
    </location>
</feature>
<feature type="compositionally biased region" description="Low complexity" evidence="1">
    <location>
        <begin position="217"/>
        <end position="237"/>
    </location>
</feature>
<feature type="compositionally biased region" description="Basic and acidic residues" evidence="1">
    <location>
        <begin position="266"/>
        <end position="278"/>
    </location>
</feature>
<feature type="compositionally biased region" description="Acidic residues" evidence="1">
    <location>
        <begin position="299"/>
        <end position="309"/>
    </location>
</feature>
<feature type="compositionally biased region" description="Basic and acidic residues" evidence="1">
    <location>
        <begin position="323"/>
        <end position="368"/>
    </location>
</feature>
<feature type="compositionally biased region" description="Basic and acidic residues" evidence="1">
    <location>
        <begin position="394"/>
        <end position="404"/>
    </location>
</feature>
<feature type="modified residue" description="Phosphoserine" evidence="3">
    <location>
        <position position="184"/>
    </location>
</feature>
<feature type="sequence conflict" description="In Ref. 2; BAC86243." evidence="2" ref="2">
    <original>H</original>
    <variation>R</variation>
    <location>
        <position position="8"/>
    </location>
</feature>
<name>ARG35_HUMAN</name>
<accession>A5YM69</accession>
<accession>Q6ZUI2</accession>
<organism>
    <name type="scientific">Homo sapiens</name>
    <name type="common">Human</name>
    <dbReference type="NCBI Taxonomy" id="9606"/>
    <lineage>
        <taxon>Eukaryota</taxon>
        <taxon>Metazoa</taxon>
        <taxon>Chordata</taxon>
        <taxon>Craniata</taxon>
        <taxon>Vertebrata</taxon>
        <taxon>Euteleostomi</taxon>
        <taxon>Mammalia</taxon>
        <taxon>Eutheria</taxon>
        <taxon>Euarchontoglires</taxon>
        <taxon>Primates</taxon>
        <taxon>Haplorrhini</taxon>
        <taxon>Catarrhini</taxon>
        <taxon>Hominidae</taxon>
        <taxon>Homo</taxon>
    </lineage>
</organism>
<keyword id="KW-0597">Phosphoprotein</keyword>
<keyword id="KW-1267">Proteomics identification</keyword>
<keyword id="KW-1185">Reference proteome</keyword>
<dbReference type="EMBL" id="EF560743">
    <property type="protein sequence ID" value="ABQ59053.1"/>
    <property type="molecule type" value="mRNA"/>
</dbReference>
<dbReference type="EMBL" id="AK125680">
    <property type="protein sequence ID" value="BAC86243.1"/>
    <property type="molecule type" value="mRNA"/>
</dbReference>
<dbReference type="EMBL" id="BC136868">
    <property type="protein sequence ID" value="AAI36869.1"/>
    <property type="molecule type" value="mRNA"/>
</dbReference>
<dbReference type="EMBL" id="BC136878">
    <property type="protein sequence ID" value="AAI36879.1"/>
    <property type="molecule type" value="mRNA"/>
</dbReference>
<dbReference type="CCDS" id="CCDS34770.1"/>
<dbReference type="RefSeq" id="NP_001003702.2">
    <property type="nucleotide sequence ID" value="NM_001003702.3"/>
</dbReference>
<dbReference type="RefSeq" id="NP_001355247.1">
    <property type="nucleotide sequence ID" value="NM_001368318.1"/>
</dbReference>
<dbReference type="RefSeq" id="XP_016885946.1">
    <property type="nucleotide sequence ID" value="XM_017030457.1"/>
</dbReference>
<dbReference type="BioGRID" id="138643">
    <property type="interactions" value="10"/>
</dbReference>
<dbReference type="FunCoup" id="A5YM69">
    <property type="interactions" value="68"/>
</dbReference>
<dbReference type="IntAct" id="A5YM69">
    <property type="interactions" value="6"/>
</dbReference>
<dbReference type="STRING" id="9606.ENSP00000367355"/>
<dbReference type="iPTMnet" id="A5YM69"/>
<dbReference type="PhosphoSitePlus" id="A5YM69"/>
<dbReference type="BioMuta" id="ARHGEF35"/>
<dbReference type="jPOST" id="A5YM69"/>
<dbReference type="MassIVE" id="A5YM69"/>
<dbReference type="PaxDb" id="9606-ENSP00000367355"/>
<dbReference type="PeptideAtlas" id="A5YM69"/>
<dbReference type="ProteomicsDB" id="763"/>
<dbReference type="Pumba" id="A5YM69"/>
<dbReference type="Antibodypedia" id="67814">
    <property type="antibodies" value="59 antibodies from 11 providers"/>
</dbReference>
<dbReference type="DNASU" id="445328"/>
<dbReference type="Ensembl" id="ENST00000378115.3">
    <property type="protein sequence ID" value="ENSP00000367355.3"/>
    <property type="gene ID" value="ENSG00000213214.6"/>
</dbReference>
<dbReference type="Ensembl" id="ENST00000688754.1">
    <property type="protein sequence ID" value="ENSP00000510684.1"/>
    <property type="gene ID" value="ENSG00000213214.6"/>
</dbReference>
<dbReference type="GeneID" id="445328"/>
<dbReference type="KEGG" id="hsa:445328"/>
<dbReference type="MANE-Select" id="ENST00000378115.3">
    <property type="protein sequence ID" value="ENSP00000367355.3"/>
    <property type="RefSeq nucleotide sequence ID" value="NM_001003702.3"/>
    <property type="RefSeq protein sequence ID" value="NP_001003702.2"/>
</dbReference>
<dbReference type="UCSC" id="uc003wdz.3">
    <property type="organism name" value="human"/>
</dbReference>
<dbReference type="AGR" id="HGNC:33846"/>
<dbReference type="CTD" id="445328"/>
<dbReference type="GeneCards" id="ARHGEF35"/>
<dbReference type="HGNC" id="HGNC:33846">
    <property type="gene designation" value="ARHGEF35"/>
</dbReference>
<dbReference type="HPA" id="ENSG00000213214">
    <property type="expression patterns" value="Low tissue specificity"/>
</dbReference>
<dbReference type="neXtProt" id="NX_A5YM69"/>
<dbReference type="OpenTargets" id="ENSG00000213214"/>
<dbReference type="PharmGKB" id="PA165617645"/>
<dbReference type="VEuPathDB" id="HostDB:ENSG00000213214"/>
<dbReference type="eggNOG" id="KOG3523">
    <property type="taxonomic scope" value="Eukaryota"/>
</dbReference>
<dbReference type="GeneTree" id="ENSGT01030000234571"/>
<dbReference type="HOGENOM" id="CLU_570570_0_0_1"/>
<dbReference type="InParanoid" id="A5YM69"/>
<dbReference type="OMA" id="SCKWREE"/>
<dbReference type="OrthoDB" id="27593at2759"/>
<dbReference type="PAN-GO" id="A5YM69">
    <property type="GO annotations" value="0 GO annotations based on evolutionary models"/>
</dbReference>
<dbReference type="PhylomeDB" id="A5YM69"/>
<dbReference type="PathwayCommons" id="A5YM69"/>
<dbReference type="Reactome" id="R-HSA-193648">
    <property type="pathway name" value="NRAGE signals death through JNK"/>
</dbReference>
<dbReference type="Reactome" id="R-HSA-416482">
    <property type="pathway name" value="G alpha (12/13) signalling events"/>
</dbReference>
<dbReference type="SignaLink" id="A5YM69"/>
<dbReference type="BioGRID-ORCS" id="445328">
    <property type="hits" value="60 hits in 1045 CRISPR screens"/>
</dbReference>
<dbReference type="ChiTaRS" id="ARHGEF35">
    <property type="organism name" value="human"/>
</dbReference>
<dbReference type="GenomeRNAi" id="445328"/>
<dbReference type="Pharos" id="A5YM69">
    <property type="development level" value="Tdark"/>
</dbReference>
<dbReference type="PRO" id="PR:A5YM69"/>
<dbReference type="Proteomes" id="UP000005640">
    <property type="component" value="Chromosome 7"/>
</dbReference>
<dbReference type="RNAct" id="A5YM69">
    <property type="molecule type" value="protein"/>
</dbReference>
<dbReference type="Bgee" id="ENSG00000213214">
    <property type="expression patterns" value="Expressed in mucosa of transverse colon and 97 other cell types or tissues"/>
</dbReference>
<dbReference type="InterPro" id="IPR029212">
    <property type="entry name" value="ARHGEF5/35_N"/>
</dbReference>
<dbReference type="Pfam" id="PF15441">
    <property type="entry name" value="ARHGEF5_35"/>
    <property type="match status" value="1"/>
</dbReference>
<gene>
    <name type="primary">ARHGEF35</name>
    <name type="synonym">ARHGEF5L</name>
</gene>
<proteinExistence type="evidence at protein level"/>
<reference key="1">
    <citation type="submission" date="2007-04" db="EMBL/GenBank/DDBJ databases">
        <authorList>
            <person name="Schupp I."/>
        </authorList>
    </citation>
    <scope>NUCLEOTIDE SEQUENCE [MRNA]</scope>
</reference>
<reference key="2">
    <citation type="journal article" date="2004" name="Nat. Genet.">
        <title>Complete sequencing and characterization of 21,243 full-length human cDNAs.</title>
        <authorList>
            <person name="Ota T."/>
            <person name="Suzuki Y."/>
            <person name="Nishikawa T."/>
            <person name="Otsuki T."/>
            <person name="Sugiyama T."/>
            <person name="Irie R."/>
            <person name="Wakamatsu A."/>
            <person name="Hayashi K."/>
            <person name="Sato H."/>
            <person name="Nagai K."/>
            <person name="Kimura K."/>
            <person name="Makita H."/>
            <person name="Sekine M."/>
            <person name="Obayashi M."/>
            <person name="Nishi T."/>
            <person name="Shibahara T."/>
            <person name="Tanaka T."/>
            <person name="Ishii S."/>
            <person name="Yamamoto J."/>
            <person name="Saito K."/>
            <person name="Kawai Y."/>
            <person name="Isono Y."/>
            <person name="Nakamura Y."/>
            <person name="Nagahari K."/>
            <person name="Murakami K."/>
            <person name="Yasuda T."/>
            <person name="Iwayanagi T."/>
            <person name="Wagatsuma M."/>
            <person name="Shiratori A."/>
            <person name="Sudo H."/>
            <person name="Hosoiri T."/>
            <person name="Kaku Y."/>
            <person name="Kodaira H."/>
            <person name="Kondo H."/>
            <person name="Sugawara M."/>
            <person name="Takahashi M."/>
            <person name="Kanda K."/>
            <person name="Yokoi T."/>
            <person name="Furuya T."/>
            <person name="Kikkawa E."/>
            <person name="Omura Y."/>
            <person name="Abe K."/>
            <person name="Kamihara K."/>
            <person name="Katsuta N."/>
            <person name="Sato K."/>
            <person name="Tanikawa M."/>
            <person name="Yamazaki M."/>
            <person name="Ninomiya K."/>
            <person name="Ishibashi T."/>
            <person name="Yamashita H."/>
            <person name="Murakawa K."/>
            <person name="Fujimori K."/>
            <person name="Tanai H."/>
            <person name="Kimata M."/>
            <person name="Watanabe M."/>
            <person name="Hiraoka S."/>
            <person name="Chiba Y."/>
            <person name="Ishida S."/>
            <person name="Ono Y."/>
            <person name="Takiguchi S."/>
            <person name="Watanabe S."/>
            <person name="Yosida M."/>
            <person name="Hotuta T."/>
            <person name="Kusano J."/>
            <person name="Kanehori K."/>
            <person name="Takahashi-Fujii A."/>
            <person name="Hara H."/>
            <person name="Tanase T.-O."/>
            <person name="Nomura Y."/>
            <person name="Togiya S."/>
            <person name="Komai F."/>
            <person name="Hara R."/>
            <person name="Takeuchi K."/>
            <person name="Arita M."/>
            <person name="Imose N."/>
            <person name="Musashino K."/>
            <person name="Yuuki H."/>
            <person name="Oshima A."/>
            <person name="Sasaki N."/>
            <person name="Aotsuka S."/>
            <person name="Yoshikawa Y."/>
            <person name="Matsunawa H."/>
            <person name="Ichihara T."/>
            <person name="Shiohata N."/>
            <person name="Sano S."/>
            <person name="Moriya S."/>
            <person name="Momiyama H."/>
            <person name="Satoh N."/>
            <person name="Takami S."/>
            <person name="Terashima Y."/>
            <person name="Suzuki O."/>
            <person name="Nakagawa S."/>
            <person name="Senoh A."/>
            <person name="Mizoguchi H."/>
            <person name="Goto Y."/>
            <person name="Shimizu F."/>
            <person name="Wakebe H."/>
            <person name="Hishigaki H."/>
            <person name="Watanabe T."/>
            <person name="Sugiyama A."/>
            <person name="Takemoto M."/>
            <person name="Kawakami B."/>
            <person name="Yamazaki M."/>
            <person name="Watanabe K."/>
            <person name="Kumagai A."/>
            <person name="Itakura S."/>
            <person name="Fukuzumi Y."/>
            <person name="Fujimori Y."/>
            <person name="Komiyama M."/>
            <person name="Tashiro H."/>
            <person name="Tanigami A."/>
            <person name="Fujiwara T."/>
            <person name="Ono T."/>
            <person name="Yamada K."/>
            <person name="Fujii Y."/>
            <person name="Ozaki K."/>
            <person name="Hirao M."/>
            <person name="Ohmori Y."/>
            <person name="Kawabata A."/>
            <person name="Hikiji T."/>
            <person name="Kobatake N."/>
            <person name="Inagaki H."/>
            <person name="Ikema Y."/>
            <person name="Okamoto S."/>
            <person name="Okitani R."/>
            <person name="Kawakami T."/>
            <person name="Noguchi S."/>
            <person name="Itoh T."/>
            <person name="Shigeta K."/>
            <person name="Senba T."/>
            <person name="Matsumura K."/>
            <person name="Nakajima Y."/>
            <person name="Mizuno T."/>
            <person name="Morinaga M."/>
            <person name="Sasaki M."/>
            <person name="Togashi T."/>
            <person name="Oyama M."/>
            <person name="Hata H."/>
            <person name="Watanabe M."/>
            <person name="Komatsu T."/>
            <person name="Mizushima-Sugano J."/>
            <person name="Satoh T."/>
            <person name="Shirai Y."/>
            <person name="Takahashi Y."/>
            <person name="Nakagawa K."/>
            <person name="Okumura K."/>
            <person name="Nagase T."/>
            <person name="Nomura N."/>
            <person name="Kikuchi H."/>
            <person name="Masuho Y."/>
            <person name="Yamashita R."/>
            <person name="Nakai K."/>
            <person name="Yada T."/>
            <person name="Nakamura Y."/>
            <person name="Ohara O."/>
            <person name="Isogai T."/>
            <person name="Sugano S."/>
        </authorList>
    </citation>
    <scope>NUCLEOTIDE SEQUENCE [LARGE SCALE MRNA]</scope>
    <source>
        <tissue>Mammary gland</tissue>
    </source>
</reference>
<reference key="3">
    <citation type="journal article" date="2004" name="Genome Res.">
        <title>The status, quality, and expansion of the NIH full-length cDNA project: the Mammalian Gene Collection (MGC).</title>
        <authorList>
            <consortium name="The MGC Project Team"/>
        </authorList>
    </citation>
    <scope>NUCLEOTIDE SEQUENCE [LARGE SCALE MRNA]</scope>
</reference>
<reference key="4">
    <citation type="journal article" date="2008" name="Proc. Natl. Acad. Sci. U.S.A.">
        <title>A quantitative atlas of mitotic phosphorylation.</title>
        <authorList>
            <person name="Dephoure N."/>
            <person name="Zhou C."/>
            <person name="Villen J."/>
            <person name="Beausoleil S.A."/>
            <person name="Bakalarski C.E."/>
            <person name="Elledge S.J."/>
            <person name="Gygi S.P."/>
        </authorList>
    </citation>
    <scope>PHOSPHORYLATION [LARGE SCALE ANALYSIS] AT SER-184</scope>
    <scope>IDENTIFICATION BY MASS SPECTROMETRY [LARGE SCALE ANALYSIS]</scope>
    <source>
        <tissue>Cervix carcinoma</tissue>
    </source>
</reference>